<organism>
    <name type="scientific">Pseudomonas savastanoi pv. phaseolicola (strain 1448A / Race 6)</name>
    <name type="common">Pseudomonas syringae pv. phaseolicola (strain 1448A / Race 6)</name>
    <dbReference type="NCBI Taxonomy" id="264730"/>
    <lineage>
        <taxon>Bacteria</taxon>
        <taxon>Pseudomonadati</taxon>
        <taxon>Pseudomonadota</taxon>
        <taxon>Gammaproteobacteria</taxon>
        <taxon>Pseudomonadales</taxon>
        <taxon>Pseudomonadaceae</taxon>
        <taxon>Pseudomonas</taxon>
    </lineage>
</organism>
<accession>Q48E81</accession>
<comment type="function">
    <text evidence="1">Involved in mRNA degradation. Catalyzes the phosphorolysis of single-stranded polyribonucleotides processively in the 3'- to 5'-direction.</text>
</comment>
<comment type="catalytic activity">
    <reaction evidence="1">
        <text>RNA(n+1) + phosphate = RNA(n) + a ribonucleoside 5'-diphosphate</text>
        <dbReference type="Rhea" id="RHEA:22096"/>
        <dbReference type="Rhea" id="RHEA-COMP:14527"/>
        <dbReference type="Rhea" id="RHEA-COMP:17342"/>
        <dbReference type="ChEBI" id="CHEBI:43474"/>
        <dbReference type="ChEBI" id="CHEBI:57930"/>
        <dbReference type="ChEBI" id="CHEBI:140395"/>
        <dbReference type="EC" id="2.7.7.8"/>
    </reaction>
</comment>
<comment type="cofactor">
    <cofactor evidence="1">
        <name>Mg(2+)</name>
        <dbReference type="ChEBI" id="CHEBI:18420"/>
    </cofactor>
</comment>
<comment type="subunit">
    <text evidence="1">Component of the RNA degradosome, which is a multiprotein complex involved in RNA processing and mRNA degradation.</text>
</comment>
<comment type="subcellular location">
    <subcellularLocation>
        <location evidence="1">Cytoplasm</location>
    </subcellularLocation>
</comment>
<comment type="similarity">
    <text evidence="1">Belongs to the polyribonucleotide nucleotidyltransferase family.</text>
</comment>
<protein>
    <recommendedName>
        <fullName evidence="1">Polyribonucleotide nucleotidyltransferase</fullName>
        <ecNumber evidence="1">2.7.7.8</ecNumber>
    </recommendedName>
    <alternativeName>
        <fullName evidence="1">Polynucleotide phosphorylase</fullName>
        <shortName evidence="1">PNPase</shortName>
    </alternativeName>
</protein>
<reference key="1">
    <citation type="journal article" date="2005" name="J. Bacteriol.">
        <title>Whole-genome sequence analysis of Pseudomonas syringae pv. phaseolicola 1448A reveals divergence among pathovars in genes involved in virulence and transposition.</title>
        <authorList>
            <person name="Joardar V."/>
            <person name="Lindeberg M."/>
            <person name="Jackson R.W."/>
            <person name="Selengut J."/>
            <person name="Dodson R."/>
            <person name="Brinkac L.M."/>
            <person name="Daugherty S.C."/>
            <person name="DeBoy R.T."/>
            <person name="Durkin A.S."/>
            <person name="Gwinn Giglio M."/>
            <person name="Madupu R."/>
            <person name="Nelson W.C."/>
            <person name="Rosovitz M.J."/>
            <person name="Sullivan S.A."/>
            <person name="Crabtree J."/>
            <person name="Creasy T."/>
            <person name="Davidsen T.M."/>
            <person name="Haft D.H."/>
            <person name="Zafar N."/>
            <person name="Zhou L."/>
            <person name="Halpin R."/>
            <person name="Holley T."/>
            <person name="Khouri H.M."/>
            <person name="Feldblyum T.V."/>
            <person name="White O."/>
            <person name="Fraser C.M."/>
            <person name="Chatterjee A.K."/>
            <person name="Cartinhour S."/>
            <person name="Schneider D."/>
            <person name="Mansfield J.W."/>
            <person name="Collmer A."/>
            <person name="Buell R."/>
        </authorList>
    </citation>
    <scope>NUCLEOTIDE SEQUENCE [LARGE SCALE GENOMIC DNA]</scope>
    <source>
        <strain>1448A / Race 6</strain>
    </source>
</reference>
<evidence type="ECO:0000255" key="1">
    <source>
        <dbReference type="HAMAP-Rule" id="MF_01595"/>
    </source>
</evidence>
<proteinExistence type="inferred from homology"/>
<feature type="chain" id="PRO_0000329787" description="Polyribonucleotide nucleotidyltransferase">
    <location>
        <begin position="1"/>
        <end position="701"/>
    </location>
</feature>
<feature type="domain" description="KH" evidence="1">
    <location>
        <begin position="554"/>
        <end position="613"/>
    </location>
</feature>
<feature type="domain" description="S1 motif" evidence="1">
    <location>
        <begin position="623"/>
        <end position="691"/>
    </location>
</feature>
<feature type="binding site" evidence="1">
    <location>
        <position position="487"/>
    </location>
    <ligand>
        <name>Mg(2+)</name>
        <dbReference type="ChEBI" id="CHEBI:18420"/>
    </ligand>
</feature>
<feature type="binding site" evidence="1">
    <location>
        <position position="493"/>
    </location>
    <ligand>
        <name>Mg(2+)</name>
        <dbReference type="ChEBI" id="CHEBI:18420"/>
    </ligand>
</feature>
<keyword id="KW-0963">Cytoplasm</keyword>
<keyword id="KW-0460">Magnesium</keyword>
<keyword id="KW-0479">Metal-binding</keyword>
<keyword id="KW-0548">Nucleotidyltransferase</keyword>
<keyword id="KW-0694">RNA-binding</keyword>
<keyword id="KW-0808">Transferase</keyword>
<dbReference type="EC" id="2.7.7.8" evidence="1"/>
<dbReference type="EMBL" id="CP000058">
    <property type="protein sequence ID" value="AAZ34280.1"/>
    <property type="molecule type" value="Genomic_DNA"/>
</dbReference>
<dbReference type="RefSeq" id="WP_005733040.1">
    <property type="nucleotide sequence ID" value="NC_005773.3"/>
</dbReference>
<dbReference type="SMR" id="Q48E81"/>
<dbReference type="GeneID" id="61871759"/>
<dbReference type="KEGG" id="psp:PSPPH_4185"/>
<dbReference type="eggNOG" id="COG1185">
    <property type="taxonomic scope" value="Bacteria"/>
</dbReference>
<dbReference type="HOGENOM" id="CLU_004217_2_2_6"/>
<dbReference type="Proteomes" id="UP000000551">
    <property type="component" value="Chromosome"/>
</dbReference>
<dbReference type="GO" id="GO:0005829">
    <property type="term" value="C:cytosol"/>
    <property type="evidence" value="ECO:0007669"/>
    <property type="project" value="TreeGrafter"/>
</dbReference>
<dbReference type="GO" id="GO:0000175">
    <property type="term" value="F:3'-5'-RNA exonuclease activity"/>
    <property type="evidence" value="ECO:0007669"/>
    <property type="project" value="TreeGrafter"/>
</dbReference>
<dbReference type="GO" id="GO:0000287">
    <property type="term" value="F:magnesium ion binding"/>
    <property type="evidence" value="ECO:0007669"/>
    <property type="project" value="UniProtKB-UniRule"/>
</dbReference>
<dbReference type="GO" id="GO:0004654">
    <property type="term" value="F:polyribonucleotide nucleotidyltransferase activity"/>
    <property type="evidence" value="ECO:0007669"/>
    <property type="project" value="UniProtKB-UniRule"/>
</dbReference>
<dbReference type="GO" id="GO:0003723">
    <property type="term" value="F:RNA binding"/>
    <property type="evidence" value="ECO:0007669"/>
    <property type="project" value="UniProtKB-UniRule"/>
</dbReference>
<dbReference type="GO" id="GO:0006402">
    <property type="term" value="P:mRNA catabolic process"/>
    <property type="evidence" value="ECO:0007669"/>
    <property type="project" value="UniProtKB-UniRule"/>
</dbReference>
<dbReference type="GO" id="GO:0006396">
    <property type="term" value="P:RNA processing"/>
    <property type="evidence" value="ECO:0007669"/>
    <property type="project" value="InterPro"/>
</dbReference>
<dbReference type="CDD" id="cd02393">
    <property type="entry name" value="KH-I_PNPase"/>
    <property type="match status" value="1"/>
</dbReference>
<dbReference type="CDD" id="cd11363">
    <property type="entry name" value="RNase_PH_PNPase_1"/>
    <property type="match status" value="1"/>
</dbReference>
<dbReference type="CDD" id="cd11364">
    <property type="entry name" value="RNase_PH_PNPase_2"/>
    <property type="match status" value="1"/>
</dbReference>
<dbReference type="CDD" id="cd04472">
    <property type="entry name" value="S1_PNPase"/>
    <property type="match status" value="1"/>
</dbReference>
<dbReference type="FunFam" id="2.40.50.140:FF:000023">
    <property type="entry name" value="Polyribonucleotide nucleotidyltransferase"/>
    <property type="match status" value="1"/>
</dbReference>
<dbReference type="FunFam" id="3.30.1370.10:FF:000001">
    <property type="entry name" value="Polyribonucleotide nucleotidyltransferase"/>
    <property type="match status" value="1"/>
</dbReference>
<dbReference type="FunFam" id="3.30.230.70:FF:000001">
    <property type="entry name" value="Polyribonucleotide nucleotidyltransferase"/>
    <property type="match status" value="1"/>
</dbReference>
<dbReference type="FunFam" id="3.30.230.70:FF:000002">
    <property type="entry name" value="Polyribonucleotide nucleotidyltransferase"/>
    <property type="match status" value="1"/>
</dbReference>
<dbReference type="Gene3D" id="3.30.230.70">
    <property type="entry name" value="GHMP Kinase, N-terminal domain"/>
    <property type="match status" value="2"/>
</dbReference>
<dbReference type="Gene3D" id="3.30.1370.10">
    <property type="entry name" value="K Homology domain, type 1"/>
    <property type="match status" value="1"/>
</dbReference>
<dbReference type="Gene3D" id="2.40.50.140">
    <property type="entry name" value="Nucleic acid-binding proteins"/>
    <property type="match status" value="1"/>
</dbReference>
<dbReference type="HAMAP" id="MF_01595">
    <property type="entry name" value="PNPase"/>
    <property type="match status" value="1"/>
</dbReference>
<dbReference type="InterPro" id="IPR001247">
    <property type="entry name" value="ExoRNase_PH_dom1"/>
</dbReference>
<dbReference type="InterPro" id="IPR015847">
    <property type="entry name" value="ExoRNase_PH_dom2"/>
</dbReference>
<dbReference type="InterPro" id="IPR036345">
    <property type="entry name" value="ExoRNase_PH_dom2_sf"/>
</dbReference>
<dbReference type="InterPro" id="IPR004087">
    <property type="entry name" value="KH_dom"/>
</dbReference>
<dbReference type="InterPro" id="IPR004088">
    <property type="entry name" value="KH_dom_type_1"/>
</dbReference>
<dbReference type="InterPro" id="IPR036612">
    <property type="entry name" value="KH_dom_type_1_sf"/>
</dbReference>
<dbReference type="InterPro" id="IPR012340">
    <property type="entry name" value="NA-bd_OB-fold"/>
</dbReference>
<dbReference type="InterPro" id="IPR012162">
    <property type="entry name" value="PNPase"/>
</dbReference>
<dbReference type="InterPro" id="IPR027408">
    <property type="entry name" value="PNPase/RNase_PH_dom_sf"/>
</dbReference>
<dbReference type="InterPro" id="IPR015848">
    <property type="entry name" value="PNPase_PH_RNA-bd_bac/org-type"/>
</dbReference>
<dbReference type="InterPro" id="IPR020568">
    <property type="entry name" value="Ribosomal_Su5_D2-typ_SF"/>
</dbReference>
<dbReference type="InterPro" id="IPR003029">
    <property type="entry name" value="S1_domain"/>
</dbReference>
<dbReference type="NCBIfam" id="TIGR03591">
    <property type="entry name" value="polynuc_phos"/>
    <property type="match status" value="1"/>
</dbReference>
<dbReference type="NCBIfam" id="NF008805">
    <property type="entry name" value="PRK11824.1"/>
    <property type="match status" value="1"/>
</dbReference>
<dbReference type="PANTHER" id="PTHR11252">
    <property type="entry name" value="POLYRIBONUCLEOTIDE NUCLEOTIDYLTRANSFERASE"/>
    <property type="match status" value="1"/>
</dbReference>
<dbReference type="PANTHER" id="PTHR11252:SF0">
    <property type="entry name" value="POLYRIBONUCLEOTIDE NUCLEOTIDYLTRANSFERASE 1, MITOCHONDRIAL"/>
    <property type="match status" value="1"/>
</dbReference>
<dbReference type="Pfam" id="PF00013">
    <property type="entry name" value="KH_1"/>
    <property type="match status" value="1"/>
</dbReference>
<dbReference type="Pfam" id="PF03726">
    <property type="entry name" value="PNPase"/>
    <property type="match status" value="1"/>
</dbReference>
<dbReference type="Pfam" id="PF01138">
    <property type="entry name" value="RNase_PH"/>
    <property type="match status" value="2"/>
</dbReference>
<dbReference type="Pfam" id="PF03725">
    <property type="entry name" value="RNase_PH_C"/>
    <property type="match status" value="2"/>
</dbReference>
<dbReference type="Pfam" id="PF00575">
    <property type="entry name" value="S1"/>
    <property type="match status" value="1"/>
</dbReference>
<dbReference type="PIRSF" id="PIRSF005499">
    <property type="entry name" value="PNPase"/>
    <property type="match status" value="1"/>
</dbReference>
<dbReference type="SMART" id="SM00322">
    <property type="entry name" value="KH"/>
    <property type="match status" value="1"/>
</dbReference>
<dbReference type="SMART" id="SM00316">
    <property type="entry name" value="S1"/>
    <property type="match status" value="1"/>
</dbReference>
<dbReference type="SUPFAM" id="SSF54791">
    <property type="entry name" value="Eukaryotic type KH-domain (KH-domain type I)"/>
    <property type="match status" value="1"/>
</dbReference>
<dbReference type="SUPFAM" id="SSF50249">
    <property type="entry name" value="Nucleic acid-binding proteins"/>
    <property type="match status" value="1"/>
</dbReference>
<dbReference type="SUPFAM" id="SSF55666">
    <property type="entry name" value="Ribonuclease PH domain 2-like"/>
    <property type="match status" value="2"/>
</dbReference>
<dbReference type="SUPFAM" id="SSF54211">
    <property type="entry name" value="Ribosomal protein S5 domain 2-like"/>
    <property type="match status" value="2"/>
</dbReference>
<dbReference type="PROSITE" id="PS50084">
    <property type="entry name" value="KH_TYPE_1"/>
    <property type="match status" value="1"/>
</dbReference>
<dbReference type="PROSITE" id="PS50126">
    <property type="entry name" value="S1"/>
    <property type="match status" value="1"/>
</dbReference>
<gene>
    <name evidence="1" type="primary">pnp</name>
    <name type="ordered locus">PSPPH_4185</name>
</gene>
<sequence>MNPVIKKFQFGQSTVTLETGRIARQASGAVLVTVDDDVSVLVTVVGAKQADAGKGFFPLSVHYQEKTYAAGKIPGGFFKREGRPSEKETLTSRLIDRPIRPLFPEGFMNEVQVVCTVVSTSKKIDPDIAAMIGTSAALAISGIPFDGPVGAARVAFHESTGYLLNPTYEQLQASSLDMVVAGTSEAVLMVESEAKELTEDQMLGAVLFAHDEFQVVINAIKELAAEAAKPVWDWQPKPEATALLGAIRAEFGDAISQAYTITVKADRYARLGELKDQVVAKLAVEEGSPSASEVKAAFGEIEYRTVRENIVNGKPRIDGRDTRTVRPLNIEVGVLPKTHGSALFTRGETQALVVATLGTARDAQLLDTLEGEKKDPFMLHYNFPPFSVGECGRMGGAGRREIGHGRLARRSVQAMLPGADVFPYTIRVVSEITESNGSSSMASVCGASLALMDAGVPMKAPVAGIAMGLVKEGEKFAILTDILGDEDHLGDMDFKVAGTSKGVTALQMDIKIKGITEEIMEIALGQALEARLNILGQMNQIIGQSRNELSANAPTMIAMKIDTDKIRDVIGKGGATIRAICEETKASIDIEDDGSIKIFGESKEAAEAARQRVLGITAEAEIGKIYVGKVERIVDFGAFVNILPGKDGLVHISMLSDARVEKVTDILKEGQEVEVLVLDVDNRGRIKLSIKDVAAAKASGV</sequence>
<name>PNP_PSE14</name>